<dbReference type="EMBL" id="CP000857">
    <property type="protein sequence ID" value="ACN45570.1"/>
    <property type="status" value="ALT_INIT"/>
    <property type="molecule type" value="Genomic_DNA"/>
</dbReference>
<dbReference type="RefSeq" id="WP_000579485.1">
    <property type="nucleotide sequence ID" value="NC_012125.1"/>
</dbReference>
<dbReference type="SMR" id="C0Q066"/>
<dbReference type="KEGG" id="sei:SPC_1409"/>
<dbReference type="HOGENOM" id="CLU_2668935_0_0_6"/>
<dbReference type="UniPathway" id="UPA00030"/>
<dbReference type="Proteomes" id="UP000001599">
    <property type="component" value="Chromosome"/>
</dbReference>
<dbReference type="GO" id="GO:0005886">
    <property type="term" value="C:plasma membrane"/>
    <property type="evidence" value="ECO:0007669"/>
    <property type="project" value="UniProtKB-SubCell"/>
</dbReference>
<dbReference type="GO" id="GO:1901505">
    <property type="term" value="F:carbohydrate derivative transmembrane transporter activity"/>
    <property type="evidence" value="ECO:0007669"/>
    <property type="project" value="InterPro"/>
</dbReference>
<dbReference type="GO" id="GO:0009245">
    <property type="term" value="P:lipid A biosynthetic process"/>
    <property type="evidence" value="ECO:0007669"/>
    <property type="project" value="UniProtKB-UniRule"/>
</dbReference>
<dbReference type="GO" id="GO:0009103">
    <property type="term" value="P:lipopolysaccharide biosynthetic process"/>
    <property type="evidence" value="ECO:0007669"/>
    <property type="project" value="UniProtKB-UniRule"/>
</dbReference>
<dbReference type="FunFam" id="1.10.3730.20:FF:000002">
    <property type="entry name" value="Probable 4-amino-4-deoxy-L-arabinose-phosphoundecaprenol flippase subunit ArnE"/>
    <property type="match status" value="1"/>
</dbReference>
<dbReference type="Gene3D" id="1.10.3730.20">
    <property type="match status" value="1"/>
</dbReference>
<dbReference type="HAMAP" id="MF_01869">
    <property type="entry name" value="Flippase_ArnE"/>
    <property type="match status" value="1"/>
</dbReference>
<dbReference type="InterPro" id="IPR000620">
    <property type="entry name" value="EamA_dom"/>
</dbReference>
<dbReference type="InterPro" id="IPR022883">
    <property type="entry name" value="Flippase_ArnE"/>
</dbReference>
<dbReference type="InterPro" id="IPR000390">
    <property type="entry name" value="Small_drug/metabolite_transptr"/>
</dbReference>
<dbReference type="NCBIfam" id="NF011625">
    <property type="entry name" value="PRK15051.1"/>
    <property type="match status" value="1"/>
</dbReference>
<dbReference type="PANTHER" id="PTHR30561:SF23">
    <property type="entry name" value="4-AMINO-4-DEOXY-L-ARABINOSE-PHOSPHOUNDECAPRENOL FLIPPASE SUBUNIT ARNE-RELATED"/>
    <property type="match status" value="1"/>
</dbReference>
<dbReference type="PANTHER" id="PTHR30561">
    <property type="entry name" value="SMR FAMILY PROTON-DEPENDENT DRUG EFFLUX TRANSPORTER SUGE"/>
    <property type="match status" value="1"/>
</dbReference>
<dbReference type="Pfam" id="PF00892">
    <property type="entry name" value="EamA"/>
    <property type="match status" value="1"/>
</dbReference>
<dbReference type="SUPFAM" id="SSF103481">
    <property type="entry name" value="Multidrug resistance efflux transporter EmrE"/>
    <property type="match status" value="1"/>
</dbReference>
<feature type="chain" id="PRO_0000383000" description="Probable 4-amino-4-deoxy-L-arabinose-phosphoundecaprenol flippase subunit ArnE">
    <location>
        <begin position="1"/>
        <end position="111"/>
    </location>
</feature>
<feature type="transmembrane region" description="Helical" evidence="1">
    <location>
        <begin position="38"/>
        <end position="58"/>
    </location>
</feature>
<feature type="transmembrane region" description="Helical" evidence="1">
    <location>
        <begin position="61"/>
        <end position="81"/>
    </location>
</feature>
<feature type="transmembrane region" description="Helical" evidence="1">
    <location>
        <begin position="91"/>
        <end position="111"/>
    </location>
</feature>
<feature type="domain" description="EamA" evidence="1">
    <location>
        <begin position="40"/>
        <end position="109"/>
    </location>
</feature>
<keyword id="KW-0997">Cell inner membrane</keyword>
<keyword id="KW-1003">Cell membrane</keyword>
<keyword id="KW-0441">Lipid A biosynthesis</keyword>
<keyword id="KW-0444">Lipid biosynthesis</keyword>
<keyword id="KW-0443">Lipid metabolism</keyword>
<keyword id="KW-0448">Lipopolysaccharide biosynthesis</keyword>
<keyword id="KW-0472">Membrane</keyword>
<keyword id="KW-0812">Transmembrane</keyword>
<keyword id="KW-1133">Transmembrane helix</keyword>
<keyword id="KW-0813">Transport</keyword>
<gene>
    <name evidence="1" type="primary">arnE</name>
    <name type="ordered locus">SPC_1409</name>
</gene>
<organism>
    <name type="scientific">Salmonella paratyphi C (strain RKS4594)</name>
    <dbReference type="NCBI Taxonomy" id="476213"/>
    <lineage>
        <taxon>Bacteria</taxon>
        <taxon>Pseudomonadati</taxon>
        <taxon>Pseudomonadota</taxon>
        <taxon>Gammaproteobacteria</taxon>
        <taxon>Enterobacterales</taxon>
        <taxon>Enterobacteriaceae</taxon>
        <taxon>Salmonella</taxon>
    </lineage>
</organism>
<sequence length="111" mass="12188">MIGIVLVLASLLSVGGQLCQKQATRPLTTGRRRRHLMLWLGLALICMGAAMVLWLLVLQTLPVGIAYPMLSLNFVWVTLAAWKIWHEQVPPRHWLGVALIISGIIILGSAA</sequence>
<comment type="function">
    <text evidence="1">Translocates 4-amino-4-deoxy-L-arabinose-phosphoundecaprenol (alpha-L-Ara4N-phosphoundecaprenol) from the cytoplasmic to the periplasmic side of the inner membrane.</text>
</comment>
<comment type="pathway">
    <text evidence="1">Bacterial outer membrane biogenesis; lipopolysaccharide biosynthesis.</text>
</comment>
<comment type="subunit">
    <text evidence="1">Heterodimer of ArnE and ArnF.</text>
</comment>
<comment type="subcellular location">
    <subcellularLocation>
        <location evidence="1">Cell inner membrane</location>
        <topology evidence="1">Multi-pass membrane protein</topology>
    </subcellularLocation>
</comment>
<comment type="similarity">
    <text evidence="1">Belongs to the ArnE family.</text>
</comment>
<comment type="sequence caution" evidence="2">
    <conflict type="erroneous initiation">
        <sequence resource="EMBL-CDS" id="ACN45570"/>
    </conflict>
</comment>
<name>ARNE_SALPC</name>
<reference key="1">
    <citation type="journal article" date="2009" name="PLoS ONE">
        <title>Salmonella paratyphi C: genetic divergence from Salmonella choleraesuis and pathogenic convergence with Salmonella typhi.</title>
        <authorList>
            <person name="Liu W.-Q."/>
            <person name="Feng Y."/>
            <person name="Wang Y."/>
            <person name="Zou Q.-H."/>
            <person name="Chen F."/>
            <person name="Guo J.-T."/>
            <person name="Peng Y.-H."/>
            <person name="Jin Y."/>
            <person name="Li Y.-G."/>
            <person name="Hu S.-N."/>
            <person name="Johnston R.N."/>
            <person name="Liu G.-R."/>
            <person name="Liu S.-L."/>
        </authorList>
    </citation>
    <scope>NUCLEOTIDE SEQUENCE [LARGE SCALE GENOMIC DNA]</scope>
    <source>
        <strain>RKS4594</strain>
    </source>
</reference>
<accession>C0Q066</accession>
<proteinExistence type="inferred from homology"/>
<protein>
    <recommendedName>
        <fullName evidence="1">Probable 4-amino-4-deoxy-L-arabinose-phosphoundecaprenol flippase subunit ArnE</fullName>
        <shortName evidence="1">L-Ara4N-phosphoundecaprenol flippase subunit ArnE</shortName>
    </recommendedName>
    <alternativeName>
        <fullName evidence="1">Undecaprenyl phosphate-aminoarabinose flippase subunit ArnE</fullName>
    </alternativeName>
</protein>
<evidence type="ECO:0000255" key="1">
    <source>
        <dbReference type="HAMAP-Rule" id="MF_01869"/>
    </source>
</evidence>
<evidence type="ECO:0000305" key="2"/>